<organism>
    <name type="scientific">Escherichia coli (strain K12 / DH10B)</name>
    <dbReference type="NCBI Taxonomy" id="316385"/>
    <lineage>
        <taxon>Bacteria</taxon>
        <taxon>Pseudomonadati</taxon>
        <taxon>Pseudomonadota</taxon>
        <taxon>Gammaproteobacteria</taxon>
        <taxon>Enterobacterales</taxon>
        <taxon>Enterobacteriaceae</taxon>
        <taxon>Escherichia</taxon>
    </lineage>
</organism>
<name>DAPD_ECODH</name>
<feature type="chain" id="PRO_1000134045" description="2,3,4,5-tetrahydropyridine-2,6-dicarboxylate N-succinyltransferase">
    <location>
        <begin position="1"/>
        <end position="274"/>
    </location>
</feature>
<sequence length="274" mass="29892">MQQLQNIIETAFERRAEITPANADTVTREAVNQVIALLDSGALRVAEKIDGQWVTHQWLKKAVLLSFRINDNQVIEGAESRYFDKVPMKFADYDEARFQKEGFRVVPPAAVRQGAFIARNTVLMPSYVNIGAYVDEGTMVDTWATVGSCAQIGKNVHLSGGVGIGGVLEPLQANPTIIEDNCFIGARSEVVEGVIVEEGSVISMGVYIGQSTRIYDRETGEIHYGRVPAGSVVVSGNLPSKDGKYSLYCAVIVKKVDAKTRGKVGINELLRTID</sequence>
<evidence type="ECO:0000255" key="1">
    <source>
        <dbReference type="HAMAP-Rule" id="MF_00811"/>
    </source>
</evidence>
<comment type="catalytic activity">
    <reaction evidence="1">
        <text>(S)-2,3,4,5-tetrahydrodipicolinate + succinyl-CoA + H2O = (S)-2-succinylamino-6-oxoheptanedioate + CoA</text>
        <dbReference type="Rhea" id="RHEA:17325"/>
        <dbReference type="ChEBI" id="CHEBI:15377"/>
        <dbReference type="ChEBI" id="CHEBI:15685"/>
        <dbReference type="ChEBI" id="CHEBI:16845"/>
        <dbReference type="ChEBI" id="CHEBI:57287"/>
        <dbReference type="ChEBI" id="CHEBI:57292"/>
        <dbReference type="EC" id="2.3.1.117"/>
    </reaction>
</comment>
<comment type="pathway">
    <text evidence="1">Amino-acid biosynthesis; L-lysine biosynthesis via DAP pathway; LL-2,6-diaminopimelate from (S)-tetrahydrodipicolinate (succinylase route): step 1/3.</text>
</comment>
<comment type="subcellular location">
    <subcellularLocation>
        <location evidence="1">Cytoplasm</location>
    </subcellularLocation>
</comment>
<comment type="similarity">
    <text evidence="1">Belongs to the transferase hexapeptide repeat family.</text>
</comment>
<reference key="1">
    <citation type="journal article" date="2008" name="J. Bacteriol.">
        <title>The complete genome sequence of Escherichia coli DH10B: insights into the biology of a laboratory workhorse.</title>
        <authorList>
            <person name="Durfee T."/>
            <person name="Nelson R."/>
            <person name="Baldwin S."/>
            <person name="Plunkett G. III"/>
            <person name="Burland V."/>
            <person name="Mau B."/>
            <person name="Petrosino J.F."/>
            <person name="Qin X."/>
            <person name="Muzny D.M."/>
            <person name="Ayele M."/>
            <person name="Gibbs R.A."/>
            <person name="Csorgo B."/>
            <person name="Posfai G."/>
            <person name="Weinstock G.M."/>
            <person name="Blattner F.R."/>
        </authorList>
    </citation>
    <scope>NUCLEOTIDE SEQUENCE [LARGE SCALE GENOMIC DNA]</scope>
    <source>
        <strain>K12 / DH10B</strain>
    </source>
</reference>
<dbReference type="EC" id="2.3.1.117" evidence="1"/>
<dbReference type="EMBL" id="CP000948">
    <property type="protein sequence ID" value="ACB01344.1"/>
    <property type="molecule type" value="Genomic_DNA"/>
</dbReference>
<dbReference type="RefSeq" id="WP_001186650.1">
    <property type="nucleotide sequence ID" value="NC_010473.1"/>
</dbReference>
<dbReference type="SMR" id="B1XD35"/>
<dbReference type="GeneID" id="93777259"/>
<dbReference type="KEGG" id="ecd:ECDH10B_0145"/>
<dbReference type="HOGENOM" id="CLU_050859_0_1_6"/>
<dbReference type="UniPathway" id="UPA00034">
    <property type="reaction ID" value="UER00019"/>
</dbReference>
<dbReference type="GO" id="GO:0005737">
    <property type="term" value="C:cytoplasm"/>
    <property type="evidence" value="ECO:0007669"/>
    <property type="project" value="UniProtKB-SubCell"/>
</dbReference>
<dbReference type="GO" id="GO:0008666">
    <property type="term" value="F:2,3,4,5-tetrahydropyridine-2,6-dicarboxylate N-succinyltransferase activity"/>
    <property type="evidence" value="ECO:0007669"/>
    <property type="project" value="UniProtKB-UniRule"/>
</dbReference>
<dbReference type="GO" id="GO:0016779">
    <property type="term" value="F:nucleotidyltransferase activity"/>
    <property type="evidence" value="ECO:0007669"/>
    <property type="project" value="TreeGrafter"/>
</dbReference>
<dbReference type="GO" id="GO:0019877">
    <property type="term" value="P:diaminopimelate biosynthetic process"/>
    <property type="evidence" value="ECO:0007669"/>
    <property type="project" value="UniProtKB-UniRule"/>
</dbReference>
<dbReference type="GO" id="GO:0009089">
    <property type="term" value="P:lysine biosynthetic process via diaminopimelate"/>
    <property type="evidence" value="ECO:0007669"/>
    <property type="project" value="UniProtKB-UniRule"/>
</dbReference>
<dbReference type="CDD" id="cd03350">
    <property type="entry name" value="LbH_THP_succinylT"/>
    <property type="match status" value="1"/>
</dbReference>
<dbReference type="FunFam" id="1.10.166.10:FF:000001">
    <property type="entry name" value="2,3,4,5-tetrahydropyridine-2,6-dicarboxylate N-succinyltransferase"/>
    <property type="match status" value="1"/>
</dbReference>
<dbReference type="FunFam" id="2.160.10.10:FF:000004">
    <property type="entry name" value="2,3,4,5-tetrahydropyridine-2,6-dicarboxylate N-succinyltransferase"/>
    <property type="match status" value="1"/>
</dbReference>
<dbReference type="Gene3D" id="2.160.10.10">
    <property type="entry name" value="Hexapeptide repeat proteins"/>
    <property type="match status" value="1"/>
</dbReference>
<dbReference type="Gene3D" id="1.10.166.10">
    <property type="entry name" value="Tetrahydrodipicolinate-N-succinyltransferase, N-terminal domain"/>
    <property type="match status" value="1"/>
</dbReference>
<dbReference type="HAMAP" id="MF_00811">
    <property type="entry name" value="DapD"/>
    <property type="match status" value="1"/>
</dbReference>
<dbReference type="InterPro" id="IPR005664">
    <property type="entry name" value="DapD_Trfase_Hexpep_rpt_fam"/>
</dbReference>
<dbReference type="InterPro" id="IPR001451">
    <property type="entry name" value="Hexapep"/>
</dbReference>
<dbReference type="InterPro" id="IPR018357">
    <property type="entry name" value="Hexapep_transf_CS"/>
</dbReference>
<dbReference type="InterPro" id="IPR023180">
    <property type="entry name" value="THP_succinylTrfase_dom1"/>
</dbReference>
<dbReference type="InterPro" id="IPR037133">
    <property type="entry name" value="THP_succinylTrfase_N_sf"/>
</dbReference>
<dbReference type="InterPro" id="IPR011004">
    <property type="entry name" value="Trimer_LpxA-like_sf"/>
</dbReference>
<dbReference type="NCBIfam" id="TIGR00965">
    <property type="entry name" value="dapD"/>
    <property type="match status" value="1"/>
</dbReference>
<dbReference type="NCBIfam" id="NF008808">
    <property type="entry name" value="PRK11830.1"/>
    <property type="match status" value="1"/>
</dbReference>
<dbReference type="PANTHER" id="PTHR19136:SF52">
    <property type="entry name" value="2,3,4,5-TETRAHYDROPYRIDINE-2,6-DICARBOXYLATE N-SUCCINYLTRANSFERASE"/>
    <property type="match status" value="1"/>
</dbReference>
<dbReference type="PANTHER" id="PTHR19136">
    <property type="entry name" value="MOLYBDENUM COFACTOR GUANYLYLTRANSFERASE"/>
    <property type="match status" value="1"/>
</dbReference>
<dbReference type="Pfam" id="PF14602">
    <property type="entry name" value="Hexapep_2"/>
    <property type="match status" value="1"/>
</dbReference>
<dbReference type="Pfam" id="PF14805">
    <property type="entry name" value="THDPS_N_2"/>
    <property type="match status" value="1"/>
</dbReference>
<dbReference type="SUPFAM" id="SSF51161">
    <property type="entry name" value="Trimeric LpxA-like enzymes"/>
    <property type="match status" value="1"/>
</dbReference>
<dbReference type="PROSITE" id="PS00101">
    <property type="entry name" value="HEXAPEP_TRANSFERASES"/>
    <property type="match status" value="1"/>
</dbReference>
<proteinExistence type="inferred from homology"/>
<keyword id="KW-0012">Acyltransferase</keyword>
<keyword id="KW-0028">Amino-acid biosynthesis</keyword>
<keyword id="KW-0963">Cytoplasm</keyword>
<keyword id="KW-0220">Diaminopimelate biosynthesis</keyword>
<keyword id="KW-0457">Lysine biosynthesis</keyword>
<keyword id="KW-0677">Repeat</keyword>
<keyword id="KW-0808">Transferase</keyword>
<gene>
    <name evidence="1" type="primary">dapD</name>
    <name type="ordered locus">ECDH10B_0145</name>
</gene>
<accession>B1XD35</accession>
<protein>
    <recommendedName>
        <fullName evidence="1">2,3,4,5-tetrahydropyridine-2,6-dicarboxylate N-succinyltransferase</fullName>
        <ecNumber evidence="1">2.3.1.117</ecNumber>
    </recommendedName>
    <alternativeName>
        <fullName evidence="1">Tetrahydrodipicolinate N-succinyltransferase</fullName>
        <shortName evidence="1">THP succinyltransferase</shortName>
        <shortName evidence="1">Tetrahydropicolinate succinylase</shortName>
    </alternativeName>
</protein>